<protein>
    <recommendedName>
        <fullName evidence="1">Sulfate adenylyltransferase subunit 2</fullName>
        <ecNumber evidence="1">2.7.7.4</ecNumber>
    </recommendedName>
    <alternativeName>
        <fullName evidence="1">ATP-sulfurylase small subunit</fullName>
    </alternativeName>
    <alternativeName>
        <fullName evidence="1">Sulfate adenylate transferase</fullName>
        <shortName evidence="1">SAT</shortName>
    </alternativeName>
</protein>
<comment type="function">
    <text evidence="1">With CysN forms the ATP sulfurylase (ATPS) that catalyzes the adenylation of sulfate producing adenosine 5'-phosphosulfate (APS) and diphosphate, the first enzymatic step in sulfur assimilation pathway. APS synthesis involves the formation of a high-energy phosphoric-sulfuric acid anhydride bond driven by GTP hydrolysis by CysN coupled to ATP hydrolysis by CysD.</text>
</comment>
<comment type="catalytic activity">
    <reaction evidence="1">
        <text>sulfate + ATP + H(+) = adenosine 5'-phosphosulfate + diphosphate</text>
        <dbReference type="Rhea" id="RHEA:18133"/>
        <dbReference type="ChEBI" id="CHEBI:15378"/>
        <dbReference type="ChEBI" id="CHEBI:16189"/>
        <dbReference type="ChEBI" id="CHEBI:30616"/>
        <dbReference type="ChEBI" id="CHEBI:33019"/>
        <dbReference type="ChEBI" id="CHEBI:58243"/>
        <dbReference type="EC" id="2.7.7.4"/>
    </reaction>
</comment>
<comment type="pathway">
    <text evidence="1">Sulfur metabolism; hydrogen sulfide biosynthesis; sulfite from sulfate: step 1/3.</text>
</comment>
<comment type="subunit">
    <text evidence="1">Heterodimer composed of CysD, the smaller subunit, and CysN.</text>
</comment>
<comment type="similarity">
    <text evidence="1">Belongs to the PAPS reductase family. CysD subfamily.</text>
</comment>
<sequence length="304" mass="35516">MEISEARLTHLKELEAESIHIIREVAAEFDNPVMLYSIGKDSSVMLRLALKAFYPGTPPFPLMHVDTTWKFREMIAFRDRMARESGMELIVHINQEGVEQGIGPFTHGSKVHTDVMKTQSLKQAMDQHRFDAAFGGARRDEEKSRAKERVYSFRDRHHRWDPKGQRPELWQLYNGRVHKGESMRIFPLSNWTELDVWQYIYLEDIPIVPLYYAAERPVVDRDGTLIMVDDERMPLEEGEQPRYEKVRFRTLGCYPLTGAIRSEADTLPEIIQEMLLTRTSERQGRVIDHDSAGSMEEKKRQGYF</sequence>
<organism>
    <name type="scientific">Halorhodospira halophila (strain DSM 244 / SL1)</name>
    <name type="common">Ectothiorhodospira halophila (strain DSM 244 / SL1)</name>
    <dbReference type="NCBI Taxonomy" id="349124"/>
    <lineage>
        <taxon>Bacteria</taxon>
        <taxon>Pseudomonadati</taxon>
        <taxon>Pseudomonadota</taxon>
        <taxon>Gammaproteobacteria</taxon>
        <taxon>Chromatiales</taxon>
        <taxon>Ectothiorhodospiraceae</taxon>
        <taxon>Halorhodospira</taxon>
    </lineage>
</organism>
<name>CYSD_HALHL</name>
<gene>
    <name evidence="1" type="primary">cysD</name>
    <name type="ordered locus">Hhal_2353</name>
</gene>
<accession>A1WZK4</accession>
<dbReference type="EC" id="2.7.7.4" evidence="1"/>
<dbReference type="EMBL" id="CP000544">
    <property type="protein sequence ID" value="ABM63116.1"/>
    <property type="molecule type" value="Genomic_DNA"/>
</dbReference>
<dbReference type="RefSeq" id="WP_011815138.1">
    <property type="nucleotide sequence ID" value="NC_008789.1"/>
</dbReference>
<dbReference type="SMR" id="A1WZK4"/>
<dbReference type="STRING" id="349124.Hhal_2353"/>
<dbReference type="KEGG" id="hha:Hhal_2353"/>
<dbReference type="eggNOG" id="COG0175">
    <property type="taxonomic scope" value="Bacteria"/>
</dbReference>
<dbReference type="HOGENOM" id="CLU_043026_0_0_6"/>
<dbReference type="UniPathway" id="UPA00140">
    <property type="reaction ID" value="UER00204"/>
</dbReference>
<dbReference type="Proteomes" id="UP000000647">
    <property type="component" value="Chromosome"/>
</dbReference>
<dbReference type="GO" id="GO:0005524">
    <property type="term" value="F:ATP binding"/>
    <property type="evidence" value="ECO:0007669"/>
    <property type="project" value="UniProtKB-KW"/>
</dbReference>
<dbReference type="GO" id="GO:0004781">
    <property type="term" value="F:sulfate adenylyltransferase (ATP) activity"/>
    <property type="evidence" value="ECO:0007669"/>
    <property type="project" value="UniProtKB-UniRule"/>
</dbReference>
<dbReference type="GO" id="GO:0070814">
    <property type="term" value="P:hydrogen sulfide biosynthetic process"/>
    <property type="evidence" value="ECO:0007669"/>
    <property type="project" value="UniProtKB-UniRule"/>
</dbReference>
<dbReference type="GO" id="GO:0000103">
    <property type="term" value="P:sulfate assimilation"/>
    <property type="evidence" value="ECO:0007669"/>
    <property type="project" value="UniProtKB-UniRule"/>
</dbReference>
<dbReference type="CDD" id="cd23946">
    <property type="entry name" value="Sulfate_adenylyltransferase_2"/>
    <property type="match status" value="1"/>
</dbReference>
<dbReference type="FunFam" id="3.40.50.620:FF:000002">
    <property type="entry name" value="Sulfate adenylyltransferase subunit 2"/>
    <property type="match status" value="1"/>
</dbReference>
<dbReference type="Gene3D" id="3.40.50.620">
    <property type="entry name" value="HUPs"/>
    <property type="match status" value="1"/>
</dbReference>
<dbReference type="HAMAP" id="MF_00064">
    <property type="entry name" value="Sulf_adenylyltr_sub2"/>
    <property type="match status" value="1"/>
</dbReference>
<dbReference type="InterPro" id="IPR002500">
    <property type="entry name" value="PAPS_reduct_dom"/>
</dbReference>
<dbReference type="InterPro" id="IPR014729">
    <property type="entry name" value="Rossmann-like_a/b/a_fold"/>
</dbReference>
<dbReference type="InterPro" id="IPR011784">
    <property type="entry name" value="SO4_adenylTrfase_ssu"/>
</dbReference>
<dbReference type="InterPro" id="IPR050128">
    <property type="entry name" value="Sulfate_adenylyltrnsfr_sub2"/>
</dbReference>
<dbReference type="NCBIfam" id="TIGR02039">
    <property type="entry name" value="CysD"/>
    <property type="match status" value="1"/>
</dbReference>
<dbReference type="NCBIfam" id="NF003587">
    <property type="entry name" value="PRK05253.1"/>
    <property type="match status" value="1"/>
</dbReference>
<dbReference type="NCBIfam" id="NF009214">
    <property type="entry name" value="PRK12563.1"/>
    <property type="match status" value="1"/>
</dbReference>
<dbReference type="PANTHER" id="PTHR43196">
    <property type="entry name" value="SULFATE ADENYLYLTRANSFERASE SUBUNIT 2"/>
    <property type="match status" value="1"/>
</dbReference>
<dbReference type="PANTHER" id="PTHR43196:SF1">
    <property type="entry name" value="SULFATE ADENYLYLTRANSFERASE SUBUNIT 2"/>
    <property type="match status" value="1"/>
</dbReference>
<dbReference type="Pfam" id="PF01507">
    <property type="entry name" value="PAPS_reduct"/>
    <property type="match status" value="1"/>
</dbReference>
<dbReference type="PIRSF" id="PIRSF002936">
    <property type="entry name" value="CysDAde_trans"/>
    <property type="match status" value="1"/>
</dbReference>
<dbReference type="SUPFAM" id="SSF52402">
    <property type="entry name" value="Adenine nucleotide alpha hydrolases-like"/>
    <property type="match status" value="1"/>
</dbReference>
<keyword id="KW-0067">ATP-binding</keyword>
<keyword id="KW-0547">Nucleotide-binding</keyword>
<keyword id="KW-0548">Nucleotidyltransferase</keyword>
<keyword id="KW-1185">Reference proteome</keyword>
<keyword id="KW-0808">Transferase</keyword>
<feature type="chain" id="PRO_1000008961" description="Sulfate adenylyltransferase subunit 2">
    <location>
        <begin position="1"/>
        <end position="304"/>
    </location>
</feature>
<proteinExistence type="inferred from homology"/>
<evidence type="ECO:0000255" key="1">
    <source>
        <dbReference type="HAMAP-Rule" id="MF_00064"/>
    </source>
</evidence>
<reference key="1">
    <citation type="submission" date="2006-12" db="EMBL/GenBank/DDBJ databases">
        <title>Complete sequence of Halorhodospira halophila SL1.</title>
        <authorList>
            <consortium name="US DOE Joint Genome Institute"/>
            <person name="Copeland A."/>
            <person name="Lucas S."/>
            <person name="Lapidus A."/>
            <person name="Barry K."/>
            <person name="Detter J.C."/>
            <person name="Glavina del Rio T."/>
            <person name="Hammon N."/>
            <person name="Israni S."/>
            <person name="Dalin E."/>
            <person name="Tice H."/>
            <person name="Pitluck S."/>
            <person name="Saunders E."/>
            <person name="Brettin T."/>
            <person name="Bruce D."/>
            <person name="Han C."/>
            <person name="Tapia R."/>
            <person name="Schmutz J."/>
            <person name="Larimer F."/>
            <person name="Land M."/>
            <person name="Hauser L."/>
            <person name="Kyrpides N."/>
            <person name="Mikhailova N."/>
            <person name="Hoff W."/>
            <person name="Richardson P."/>
        </authorList>
    </citation>
    <scope>NUCLEOTIDE SEQUENCE [LARGE SCALE GENOMIC DNA]</scope>
    <source>
        <strain>DSM 244 / SL1</strain>
    </source>
</reference>